<name>VP6_ROTRF</name>
<evidence type="ECO:0000255" key="1">
    <source>
        <dbReference type="HAMAP-Rule" id="MF_04129"/>
    </source>
</evidence>
<evidence type="ECO:0000269" key="2">
    <source>
    </source>
</evidence>
<evidence type="ECO:0000269" key="3">
    <source>
    </source>
</evidence>
<evidence type="ECO:0000269" key="4">
    <source>
    </source>
</evidence>
<evidence type="ECO:0000269" key="5">
    <source>
    </source>
</evidence>
<evidence type="ECO:0000269" key="6">
    <source>
    </source>
</evidence>
<evidence type="ECO:0000305" key="7"/>
<evidence type="ECO:0007744" key="8">
    <source>
        <dbReference type="PDB" id="3GZU"/>
    </source>
</evidence>
<evidence type="ECO:0007829" key="9">
    <source>
        <dbReference type="PDB" id="1QHD"/>
    </source>
</evidence>
<organism>
    <name type="scientific">Rotavirus A (strain RVA/Cow/France/RF/1975/G6P6[1])</name>
    <name type="common">RV-A</name>
    <dbReference type="NCBI Taxonomy" id="10933"/>
    <lineage>
        <taxon>Viruses</taxon>
        <taxon>Riboviria</taxon>
        <taxon>Orthornavirae</taxon>
        <taxon>Duplornaviricota</taxon>
        <taxon>Resentoviricetes</taxon>
        <taxon>Reovirales</taxon>
        <taxon>Sedoreoviridae</taxon>
        <taxon>Rotavirus</taxon>
        <taxon>Rotavirus A</taxon>
    </lineage>
</organism>
<dbReference type="EMBL" id="K02254">
    <property type="protein sequence ID" value="AAC98425.1"/>
    <property type="molecule type" value="Genomic_RNA"/>
</dbReference>
<dbReference type="PIR" id="A04132">
    <property type="entry name" value="VPXRBR"/>
</dbReference>
<dbReference type="PDB" id="1QHD">
    <property type="method" value="X-ray"/>
    <property type="resolution" value="1.95 A"/>
    <property type="chains" value="A=1-397"/>
</dbReference>
<dbReference type="PDB" id="3GZU">
    <property type="method" value="EM"/>
    <property type="chains" value="C/D/E/F/G/H/I/J/K/L/M/N/O=1-397"/>
</dbReference>
<dbReference type="PDB" id="3J9S">
    <property type="method" value="EM"/>
    <property type="resolution" value="2.60 A"/>
    <property type="chains" value="A=1-397"/>
</dbReference>
<dbReference type="PDBsum" id="1QHD"/>
<dbReference type="PDBsum" id="3GZU"/>
<dbReference type="PDBsum" id="3J9S"/>
<dbReference type="EMDB" id="EMD-1609"/>
<dbReference type="SMR" id="P04509"/>
<dbReference type="EvolutionaryTrace" id="P04509"/>
<dbReference type="Proteomes" id="UP000007179">
    <property type="component" value="Genome"/>
</dbReference>
<dbReference type="GO" id="GO:0039621">
    <property type="term" value="C:T=13 icosahedral viral capsid"/>
    <property type="evidence" value="ECO:0000314"/>
    <property type="project" value="UniProtKB"/>
</dbReference>
<dbReference type="GO" id="GO:0019031">
    <property type="term" value="C:viral envelope"/>
    <property type="evidence" value="ECO:0007669"/>
    <property type="project" value="UniProtKB-UniRule"/>
</dbReference>
<dbReference type="GO" id="GO:0039626">
    <property type="term" value="C:viral intermediate capsid"/>
    <property type="evidence" value="ECO:0000314"/>
    <property type="project" value="UniProtKB"/>
</dbReference>
<dbReference type="GO" id="GO:0046789">
    <property type="term" value="F:host cell surface receptor binding"/>
    <property type="evidence" value="ECO:0007669"/>
    <property type="project" value="UniProtKB-UniRule"/>
</dbReference>
<dbReference type="GO" id="GO:0046872">
    <property type="term" value="F:metal ion binding"/>
    <property type="evidence" value="ECO:0007669"/>
    <property type="project" value="UniProtKB-UniRule"/>
</dbReference>
<dbReference type="GO" id="GO:0005198">
    <property type="term" value="F:structural molecule activity"/>
    <property type="evidence" value="ECO:0007669"/>
    <property type="project" value="UniProtKB-UniRule"/>
</dbReference>
<dbReference type="GO" id="GO:0019064">
    <property type="term" value="P:fusion of virus membrane with host plasma membrane"/>
    <property type="evidence" value="ECO:0007669"/>
    <property type="project" value="UniProtKB-UniRule"/>
</dbReference>
<dbReference type="FunFam" id="2.60.120.170:FF:000001">
    <property type="entry name" value="Intermediate capsid protein VP6"/>
    <property type="match status" value="1"/>
</dbReference>
<dbReference type="Gene3D" id="2.60.120.170">
    <property type="match status" value="1"/>
</dbReference>
<dbReference type="Gene3D" id="1.10.1350.10">
    <property type="entry name" value="Viral capsid alpha domain"/>
    <property type="match status" value="1"/>
</dbReference>
<dbReference type="HAMAP" id="MF_04126">
    <property type="entry name" value="Rota_VP6"/>
    <property type="match status" value="1"/>
</dbReference>
<dbReference type="HAMAP" id="MF_04129">
    <property type="entry name" value="Rota_VP6_A"/>
    <property type="match status" value="1"/>
</dbReference>
<dbReference type="InterPro" id="IPR008980">
    <property type="entry name" value="Capsid_hemagglutn"/>
</dbReference>
<dbReference type="InterPro" id="IPR001385">
    <property type="entry name" value="Rotavirus_A/C_VP6"/>
</dbReference>
<dbReference type="InterPro" id="IPR008935">
    <property type="entry name" value="Virus_capsid_a-hlx_vir"/>
</dbReference>
<dbReference type="Pfam" id="PF00980">
    <property type="entry name" value="Rota_Capsid_VP6"/>
    <property type="match status" value="1"/>
</dbReference>
<dbReference type="SUPFAM" id="SSF48345">
    <property type="entry name" value="A virus capsid protein alpha-helical domain"/>
    <property type="match status" value="1"/>
</dbReference>
<dbReference type="SUPFAM" id="SSF49818">
    <property type="entry name" value="Viral protein domain"/>
    <property type="match status" value="1"/>
</dbReference>
<protein>
    <recommendedName>
        <fullName evidence="1">Intermediate capsid protein VP6</fullName>
    </recommendedName>
</protein>
<keyword id="KW-0002">3D-structure</keyword>
<keyword id="KW-0106">Calcium</keyword>
<keyword id="KW-0167">Capsid protein</keyword>
<keyword id="KW-1154">Intermediate capsid protein</keyword>
<keyword id="KW-0479">Metal-binding</keyword>
<keyword id="KW-0832">Ubl conjugation</keyword>
<keyword id="KW-0946">Virion</keyword>
<keyword id="KW-0862">Zinc</keyword>
<organismHost>
    <name type="scientific">Bos taurus</name>
    <name type="common">Bovine</name>
    <dbReference type="NCBI Taxonomy" id="9913"/>
</organismHost>
<feature type="chain" id="PRO_0000149561" description="Intermediate capsid protein VP6">
    <location>
        <begin position="1"/>
        <end position="397"/>
    </location>
</feature>
<feature type="region of interest" description="Interaction with the inner capsid protein VP2" evidence="1">
    <location>
        <begin position="62"/>
        <end position="73"/>
    </location>
</feature>
<feature type="binding site" evidence="1 2">
    <location>
        <position position="153"/>
    </location>
    <ligand>
        <name>Zn(2+)</name>
        <dbReference type="ChEBI" id="CHEBI:29105"/>
        <note>ligand shared between all trimeric partners</note>
    </ligand>
</feature>
<feature type="binding site" evidence="1 2">
    <location>
        <position position="266"/>
    </location>
    <ligand>
        <name>Ca(2+)</name>
        <dbReference type="ChEBI" id="CHEBI:29108"/>
    </ligand>
</feature>
<feature type="binding site" evidence="1 2">
    <location>
        <position position="286"/>
    </location>
    <ligand>
        <name>Ca(2+)</name>
        <dbReference type="ChEBI" id="CHEBI:29108"/>
    </ligand>
</feature>
<feature type="mutagenesis site" description="Complete loss of in vitro DLP transcription activity, no effect on particle assembly." evidence="3">
    <original>Q</original>
    <variation>E</variation>
    <location>
        <position position="32"/>
    </location>
</feature>
<feature type="mutagenesis site" description="Loss of in vitro DLP transcriptase activity, no effect on particle assembly; when associated with A-70 or N-70. Loss of in vitro DLP assembly and transcriptase activity, and almost complete loss of interaction with VP2; when associated with N-71." evidence="3">
    <original>L</original>
    <variation>D</variation>
    <location>
        <position position="65"/>
    </location>
</feature>
<feature type="mutagenesis site" description="Loss of in vitro DLP transcriptase activity, no effect on particle assembly; when associated with D-65." evidence="3">
    <original>L</original>
    <variation>A</variation>
    <location>
        <position position="70"/>
    </location>
</feature>
<feature type="mutagenesis site" description="Loss of in vitro DLP assembly and transcriptase activity, and almost complete loss of interaction with VP2; when associated with N-71. Loss of in vitro DLP transcriptase activity, no effect on particle assembly; when associated with D-65." evidence="3">
    <original>L</original>
    <variation>N</variation>
    <location>
        <position position="70"/>
    </location>
</feature>
<feature type="mutagenesis site" description="Loss of in vitro DLP assembly and transcriptase activity, and almost complete loss of interaction with VP2; when associated with D-65 or N-70." evidence="3">
    <original>L</original>
    <variation>N</variation>
    <location>
        <position position="71"/>
    </location>
</feature>
<feature type="mutagenesis site" description="Impaired homotrimer formation at pH above 7.0. No effect on transcription activity or on VP2-VP6 interaction." evidence="4">
    <original>H</original>
    <variation>S</variation>
    <location>
        <position position="153"/>
    </location>
</feature>
<feature type="helix" evidence="9">
    <location>
        <begin position="2"/>
        <end position="17"/>
    </location>
</feature>
<feature type="helix" evidence="9">
    <location>
        <begin position="24"/>
        <end position="26"/>
    </location>
</feature>
<feature type="helix" evidence="9">
    <location>
        <begin position="28"/>
        <end position="41"/>
    </location>
</feature>
<feature type="strand" evidence="9">
    <location>
        <begin position="45"/>
        <end position="48"/>
    </location>
</feature>
<feature type="strand" evidence="9">
    <location>
        <begin position="57"/>
        <end position="60"/>
    </location>
</feature>
<feature type="helix" evidence="9">
    <location>
        <begin position="75"/>
        <end position="100"/>
    </location>
</feature>
<feature type="turn" evidence="9">
    <location>
        <begin position="105"/>
        <end position="109"/>
    </location>
</feature>
<feature type="helix" evidence="9">
    <location>
        <begin position="114"/>
        <end position="119"/>
    </location>
</feature>
<feature type="helix" evidence="9">
    <location>
        <begin position="122"/>
        <end position="127"/>
    </location>
</feature>
<feature type="helix" evidence="9">
    <location>
        <begin position="134"/>
        <end position="143"/>
    </location>
</feature>
<feature type="strand" evidence="9">
    <location>
        <begin position="150"/>
        <end position="154"/>
    </location>
</feature>
<feature type="strand" evidence="9">
    <location>
        <begin position="158"/>
        <end position="168"/>
    </location>
</feature>
<feature type="strand" evidence="9">
    <location>
        <begin position="177"/>
        <end position="185"/>
    </location>
</feature>
<feature type="strand" evidence="9">
    <location>
        <begin position="187"/>
        <end position="194"/>
    </location>
</feature>
<feature type="turn" evidence="9">
    <location>
        <begin position="195"/>
        <end position="200"/>
    </location>
</feature>
<feature type="helix" evidence="9">
    <location>
        <begin position="202"/>
        <end position="204"/>
    </location>
</feature>
<feature type="strand" evidence="9">
    <location>
        <begin position="205"/>
        <end position="227"/>
    </location>
</feature>
<feature type="helix" evidence="9">
    <location>
        <begin position="230"/>
        <end position="232"/>
    </location>
</feature>
<feature type="strand" evidence="9">
    <location>
        <begin position="236"/>
        <end position="239"/>
    </location>
</feature>
<feature type="strand" evidence="9">
    <location>
        <begin position="246"/>
        <end position="249"/>
    </location>
</feature>
<feature type="strand" evidence="9">
    <location>
        <begin position="251"/>
        <end position="253"/>
    </location>
</feature>
<feature type="strand" evidence="9">
    <location>
        <begin position="257"/>
        <end position="265"/>
    </location>
</feature>
<feature type="strand" evidence="9">
    <location>
        <begin position="268"/>
        <end position="275"/>
    </location>
</feature>
<feature type="strand" evidence="9">
    <location>
        <begin position="278"/>
        <end position="295"/>
    </location>
</feature>
<feature type="helix" evidence="9">
    <location>
        <begin position="302"/>
        <end position="305"/>
    </location>
</feature>
<feature type="strand" evidence="9">
    <location>
        <begin position="310"/>
        <end position="312"/>
    </location>
</feature>
<feature type="strand" evidence="9">
    <location>
        <begin position="316"/>
        <end position="333"/>
    </location>
</feature>
<feature type="helix" evidence="9">
    <location>
        <begin position="342"/>
        <end position="352"/>
    </location>
</feature>
<feature type="strand" evidence="9">
    <location>
        <begin position="359"/>
        <end position="361"/>
    </location>
</feature>
<feature type="helix" evidence="9">
    <location>
        <begin position="363"/>
        <end position="365"/>
    </location>
</feature>
<feature type="helix" evidence="9">
    <location>
        <begin position="367"/>
        <end position="372"/>
    </location>
</feature>
<feature type="helix" evidence="9">
    <location>
        <begin position="376"/>
        <end position="392"/>
    </location>
</feature>
<feature type="turn" evidence="9">
    <location>
        <begin position="393"/>
        <end position="395"/>
    </location>
</feature>
<reference key="1">
    <citation type="journal article" date="1984" name="Virology">
        <title>Cloning of bovine rotavirus (RF strain): nucleotide sequence of the gene coding for the major capsid protein.</title>
        <authorList>
            <person name="Cohen J."/>
            <person name="Lefevre F."/>
            <person name="Estes M.K."/>
            <person name="Bremont M."/>
        </authorList>
    </citation>
    <scope>NUCLEOTIDE SEQUENCE [GENOMIC RNA]</scope>
</reference>
<reference key="2">
    <citation type="submission" date="1998-12" db="EMBL/GenBank/DDBJ databases">
        <authorList>
            <person name="Cohen J."/>
        </authorList>
    </citation>
    <scope>SEQUENCE REVISION</scope>
</reference>
<reference key="3">
    <citation type="journal article" date="1982" name="J. Virol.">
        <title>Purification and characterization of bovine rotavirus cores.</title>
        <authorList>
            <person name="Bican P."/>
            <person name="Cohen J."/>
            <person name="Charpilienne A."/>
            <person name="Scherrer R."/>
        </authorList>
    </citation>
    <scope>FUNCTION</scope>
    <scope>SUBCELLULAR LOCATION</scope>
</reference>
<reference key="4">
    <citation type="journal article" date="2002" name="J. Virol.">
        <title>Identification of rotavirus VP6 residues located at the interface with VP2 that are essential for capsid assembly and transcriptase activity.</title>
        <authorList>
            <person name="Charpilienne A."/>
            <person name="Lepault J."/>
            <person name="Rey F.A."/>
            <person name="Cohen J."/>
        </authorList>
    </citation>
    <scope>INTERACTION WITH THE INNER CAPSID PROTEIN VP2</scope>
    <scope>SUBCELLULAR LOCATION</scope>
    <scope>MUTAGENESIS OF GLN-32; LEU-65; LEU-70 AND LEU-71</scope>
    <scope>FUNCTION</scope>
</reference>
<reference key="5">
    <citation type="journal article" date="2003" name="J. Virol.">
        <title>A zinc ion controls assembly and stability of the major capsid protein of rotavirus.</title>
        <authorList>
            <person name="Erk I."/>
            <person name="Huet J.-C."/>
            <person name="Duarte M."/>
            <person name="Duquerroy S."/>
            <person name="Rey F.A."/>
            <person name="Cohen J."/>
            <person name="Lepault J."/>
        </authorList>
    </citation>
    <scope>ZINC-BINDING</scope>
    <scope>MUTAGENESIS OF HIS-153</scope>
</reference>
<reference key="6">
    <citation type="journal article" date="2001" name="EMBO J.">
        <title>Atomic structure of the major capsid protein of rotavirus: implications for the architecture of the virion.</title>
        <authorList>
            <person name="Mathieu M."/>
            <person name="Petitpas I."/>
            <person name="Navaza J."/>
            <person name="Lepault J."/>
            <person name="Kohli E."/>
            <person name="Pothier P."/>
            <person name="Prasad B.V.V."/>
            <person name="Cohen J."/>
            <person name="Rey F.A."/>
        </authorList>
    </citation>
    <scope>X-RAY CRYSTALLOGRAPHY (1.95 ANGSTROMS) IN COMPLEX WITH ZINC</scope>
    <scope>SUBUNIT</scope>
    <scope>ZINC-BINDING</scope>
    <scope>FUNCTION</scope>
    <scope>INTERACTION WITH THE INNER CAPSID PROTEIN VP2</scope>
    <scope>INTERACTION WITH THE OUTER CAPSID GLYCOPROTEIN VP7</scope>
    <scope>SUBCELLULAR LOCATION</scope>
</reference>
<reference evidence="8" key="7">
    <citation type="journal article" date="2009" name="Proc. Natl. Acad. Sci. U.S.A.">
        <title>Molecular interactions in rotavirus assembly and uncoating seen by high-resolution cryo-EM.</title>
        <authorList>
            <person name="Chen J.Z."/>
            <person name="Settembre E.C."/>
            <person name="Aoki S.T."/>
            <person name="Zhang X."/>
            <person name="Bellamy A.R."/>
            <person name="Dormitzer P.R."/>
            <person name="Harrison S.C."/>
            <person name="Grigorieff N."/>
        </authorList>
    </citation>
    <scope>STRUCTURE BY ELECTRON MICROSCOPY (3.80 ANGSTROMS)</scope>
    <scope>INTERACTION WITH THE OUTER CAPSID GLYCOPROTEIN VP7</scope>
</reference>
<comment type="function">
    <text evidence="1 2 3 6">Intermediate capsid protein that self assembles to form an icosahedral capsid with a T=13 symmetry, which consists of 230 trimers of VP6, with channels at each of its five-fold vertices (PubMed:11285213). This capsid constitutes the middle concentric layer of the viral mature particle (PubMed:11285213). The innermost VP2 capsid and the intermediate VP6 capsid remain intact following cell entry to protect the dsRNA from degradation and to prevent unfavorable antiviral responses in the host cell during all the replication cycle of the virus. Nascent transcripts are transcribed within the structural confines of this double-layered particle (DLP) and are extruded through the channels at the five-fold axes (By similarity). VP6 is required for the transcription activity of the DLP (PubMed:12097594).</text>
</comment>
<comment type="subunit">
    <text evidence="1 2 3 5">Homotrimer (PubMed:11285213). Interacts with the inner capsid protein VP2 (PubMed:11285213, PubMed:12097594). Interacts with the outer capsid glycoprotein VP7 (PubMed:11285213, PubMed:19487668). Interacts with the outer capsid protein VP5* (By similarity).</text>
</comment>
<comment type="subcellular location">
    <subcellularLocation>
        <location evidence="1 2 3">Virion</location>
    </subcellularLocation>
    <text evidence="1 2">Component of the intermediate capsid (PubMed:11285213). Also found in spherical cytoplasmic structures, called virus factories, that appear early after infection and are the site of viral replication and packaging (Potential).</text>
</comment>
<comment type="PTM">
    <text evidence="1 4">The N-terminus is blocked.</text>
</comment>
<comment type="PTM">
    <text evidence="1">Sumoylated with SUMO1 and SUMO2. Sumoylation of viral proteins seems to have a positive role on viral replication.</text>
</comment>
<comment type="miscellaneous">
    <text evidence="1 2 4">The VP6 trimer contains a zinc ion located at the center of the molecule (PubMed:11285213). The zinc ion is not essential for either trimerization or transcription activity of the DLP. Zinc-depleted VP6 has an increased sensitivity to proteases (PubMed:12610135).</text>
</comment>
<comment type="similarity">
    <text evidence="1 7">Belongs to the rotavirus VP6 family.</text>
</comment>
<accession>P04509</accession>
<proteinExistence type="evidence at protein level"/>
<sequence>MDVLYSLSKTLKDARDKIVEGTLYSNVSDLIQQFNQMIITMNGNEFQTGGIGNLPIRNWNFDFGLLGTTLLNLDANYVETARNTIDYFVDFVDNVCMDEMVRESQRNGIAPQSDSLIKLSGIKFKRINFDNSSEYIENWNLQNRRQRTGFTFHKPNIFPYSASFTLNRSQPAHDNLMGTMWLNAGSEIQVAGFDYSCAINAPANTQQFEHIVQLRRVLTTATITLLPDAERFSFPRVITSADGATTWYFNPVILRPNNVEIEFLLNGQIINTYQARFGTIIARNFDTIRLSFQLMRPPNMTPAVAALFPNAQPFEHHATVGLTLRIESAVCESVLADASETMLANVTSVRQEYAIPVGPVFPPGMNWTDLITNYSPSREDNLQRVFTVASIRSMLVK</sequence>